<reference key="1">
    <citation type="journal article" date="1995" name="Science">
        <title>Whole-genome random sequencing and assembly of Haemophilus influenzae Rd.</title>
        <authorList>
            <person name="Fleischmann R.D."/>
            <person name="Adams M.D."/>
            <person name="White O."/>
            <person name="Clayton R.A."/>
            <person name="Kirkness E.F."/>
            <person name="Kerlavage A.R."/>
            <person name="Bult C.J."/>
            <person name="Tomb J.-F."/>
            <person name="Dougherty B.A."/>
            <person name="Merrick J.M."/>
            <person name="McKenney K."/>
            <person name="Sutton G.G."/>
            <person name="FitzHugh W."/>
            <person name="Fields C.A."/>
            <person name="Gocayne J.D."/>
            <person name="Scott J.D."/>
            <person name="Shirley R."/>
            <person name="Liu L.-I."/>
            <person name="Glodek A."/>
            <person name="Kelley J.M."/>
            <person name="Weidman J.F."/>
            <person name="Phillips C.A."/>
            <person name="Spriggs T."/>
            <person name="Hedblom E."/>
            <person name="Cotton M.D."/>
            <person name="Utterback T.R."/>
            <person name="Hanna M.C."/>
            <person name="Nguyen D.T."/>
            <person name="Saudek D.M."/>
            <person name="Brandon R.C."/>
            <person name="Fine L.D."/>
            <person name="Fritchman J.L."/>
            <person name="Fuhrmann J.L."/>
            <person name="Geoghagen N.S.M."/>
            <person name="Gnehm C.L."/>
            <person name="McDonald L.A."/>
            <person name="Small K.V."/>
            <person name="Fraser C.M."/>
            <person name="Smith H.O."/>
            <person name="Venter J.C."/>
        </authorList>
    </citation>
    <scope>NUCLEOTIDE SEQUENCE [LARGE SCALE GENOMIC DNA]</scope>
    <source>
        <strain>ATCC 51907 / DSM 11121 / KW20 / Rd</strain>
    </source>
</reference>
<keyword id="KW-1185">Reference proteome</keyword>
<keyword id="KW-0687">Ribonucleoprotein</keyword>
<keyword id="KW-0689">Ribosomal protein</keyword>
<evidence type="ECO:0000250" key="1"/>
<evidence type="ECO:0000305" key="2"/>
<dbReference type="EMBL" id="L42023">
    <property type="protein sequence ID" value="AAC23092.1"/>
    <property type="molecule type" value="Genomic_DNA"/>
</dbReference>
<dbReference type="PIR" id="F64123">
    <property type="entry name" value="F64123"/>
</dbReference>
<dbReference type="RefSeq" id="NP_439594.1">
    <property type="nucleotide sequence ID" value="NC_000907.1"/>
</dbReference>
<dbReference type="STRING" id="71421.HI_1442"/>
<dbReference type="EnsemblBacteria" id="AAC23092">
    <property type="protein sequence ID" value="AAC23092"/>
    <property type="gene ID" value="HI_1442"/>
</dbReference>
<dbReference type="KEGG" id="hin:HI_1442"/>
<dbReference type="PATRIC" id="fig|71421.8.peg.1504"/>
<dbReference type="eggNOG" id="COG0103">
    <property type="taxonomic scope" value="Bacteria"/>
</dbReference>
<dbReference type="HOGENOM" id="CLU_046483_2_1_6"/>
<dbReference type="OrthoDB" id="9803965at2"/>
<dbReference type="PhylomeDB" id="P44388"/>
<dbReference type="BioCyc" id="HINF71421:G1GJ1-1468-MONOMER"/>
<dbReference type="Proteomes" id="UP000000579">
    <property type="component" value="Chromosome"/>
</dbReference>
<dbReference type="GO" id="GO:0022627">
    <property type="term" value="C:cytosolic small ribosomal subunit"/>
    <property type="evidence" value="ECO:0000318"/>
    <property type="project" value="GO_Central"/>
</dbReference>
<dbReference type="GO" id="GO:0003723">
    <property type="term" value="F:RNA binding"/>
    <property type="evidence" value="ECO:0000318"/>
    <property type="project" value="GO_Central"/>
</dbReference>
<dbReference type="GO" id="GO:0003735">
    <property type="term" value="F:structural constituent of ribosome"/>
    <property type="evidence" value="ECO:0000318"/>
    <property type="project" value="GO_Central"/>
</dbReference>
<dbReference type="GO" id="GO:0006412">
    <property type="term" value="P:translation"/>
    <property type="evidence" value="ECO:0007669"/>
    <property type="project" value="UniProtKB-UniRule"/>
</dbReference>
<dbReference type="FunFam" id="3.30.230.10:FF:000001">
    <property type="entry name" value="30S ribosomal protein S9"/>
    <property type="match status" value="1"/>
</dbReference>
<dbReference type="Gene3D" id="3.30.230.10">
    <property type="match status" value="1"/>
</dbReference>
<dbReference type="HAMAP" id="MF_00532_B">
    <property type="entry name" value="Ribosomal_uS9_B"/>
    <property type="match status" value="1"/>
</dbReference>
<dbReference type="InterPro" id="IPR020568">
    <property type="entry name" value="Ribosomal_Su5_D2-typ_SF"/>
</dbReference>
<dbReference type="InterPro" id="IPR000754">
    <property type="entry name" value="Ribosomal_uS9"/>
</dbReference>
<dbReference type="InterPro" id="IPR023035">
    <property type="entry name" value="Ribosomal_uS9_bac/plastid"/>
</dbReference>
<dbReference type="InterPro" id="IPR020574">
    <property type="entry name" value="Ribosomal_uS9_CS"/>
</dbReference>
<dbReference type="InterPro" id="IPR014721">
    <property type="entry name" value="Ribsml_uS5_D2-typ_fold_subgr"/>
</dbReference>
<dbReference type="NCBIfam" id="NF001099">
    <property type="entry name" value="PRK00132.1"/>
    <property type="match status" value="1"/>
</dbReference>
<dbReference type="PANTHER" id="PTHR21569">
    <property type="entry name" value="RIBOSOMAL PROTEIN S9"/>
    <property type="match status" value="1"/>
</dbReference>
<dbReference type="PANTHER" id="PTHR21569:SF1">
    <property type="entry name" value="SMALL RIBOSOMAL SUBUNIT PROTEIN US9M"/>
    <property type="match status" value="1"/>
</dbReference>
<dbReference type="Pfam" id="PF00380">
    <property type="entry name" value="Ribosomal_S9"/>
    <property type="match status" value="1"/>
</dbReference>
<dbReference type="SUPFAM" id="SSF54211">
    <property type="entry name" value="Ribosomal protein S5 domain 2-like"/>
    <property type="match status" value="1"/>
</dbReference>
<dbReference type="PROSITE" id="PS00360">
    <property type="entry name" value="RIBOSOMAL_S9"/>
    <property type="match status" value="1"/>
</dbReference>
<comment type="similarity">
    <text evidence="2">Belongs to the universal ribosomal protein uS9 family.</text>
</comment>
<feature type="initiator methionine" description="Removed" evidence="1">
    <location>
        <position position="1"/>
    </location>
</feature>
<feature type="chain" id="PRO_0000111361" description="Small ribosomal subunit protein uS9">
    <location>
        <begin position="2"/>
        <end position="130"/>
    </location>
</feature>
<organism>
    <name type="scientific">Haemophilus influenzae (strain ATCC 51907 / DSM 11121 / KW20 / Rd)</name>
    <dbReference type="NCBI Taxonomy" id="71421"/>
    <lineage>
        <taxon>Bacteria</taxon>
        <taxon>Pseudomonadati</taxon>
        <taxon>Pseudomonadota</taxon>
        <taxon>Gammaproteobacteria</taxon>
        <taxon>Pasteurellales</taxon>
        <taxon>Pasteurellaceae</taxon>
        <taxon>Haemophilus</taxon>
    </lineage>
</organism>
<accession>P44388</accession>
<sequence>MAENQNYGTGRRKSSSARVFIKPGSGKITINQRELDVYFGRETARMVVRQPLELVXLTDKLDLYITVKGGGISGQAGAIRHGITRALMEYDETLRPALRAAGFVTRDARRVERKKVGLHKARRRPQYSKR</sequence>
<gene>
    <name type="primary">rpsI</name>
    <name type="synonym">rps9</name>
    <name type="ordered locus">HI_1442</name>
</gene>
<proteinExistence type="inferred from homology"/>
<name>RS9_HAEIN</name>
<protein>
    <recommendedName>
        <fullName evidence="2">Small ribosomal subunit protein uS9</fullName>
    </recommendedName>
    <alternativeName>
        <fullName>30S ribosomal protein S9</fullName>
    </alternativeName>
</protein>